<keyword id="KW-0007">Acetylation</keyword>
<keyword id="KW-0150">Chloroplast</keyword>
<keyword id="KW-0378">Hydrolase</keyword>
<keyword id="KW-0597">Phosphoprotein</keyword>
<keyword id="KW-0601">Photorespiration</keyword>
<keyword id="KW-0934">Plastid</keyword>
<keyword id="KW-1185">Reference proteome</keyword>
<keyword id="KW-0809">Transit peptide</keyword>
<organism>
    <name type="scientific">Arabidopsis thaliana</name>
    <name type="common">Mouse-ear cress</name>
    <dbReference type="NCBI Taxonomy" id="3702"/>
    <lineage>
        <taxon>Eukaryota</taxon>
        <taxon>Viridiplantae</taxon>
        <taxon>Streptophyta</taxon>
        <taxon>Embryophyta</taxon>
        <taxon>Tracheophyta</taxon>
        <taxon>Spermatophyta</taxon>
        <taxon>Magnoliopsida</taxon>
        <taxon>eudicotyledons</taxon>
        <taxon>Gunneridae</taxon>
        <taxon>Pentapetalae</taxon>
        <taxon>rosids</taxon>
        <taxon>malvids</taxon>
        <taxon>Brassicales</taxon>
        <taxon>Brassicaceae</taxon>
        <taxon>Camelineae</taxon>
        <taxon>Arabidopsis</taxon>
    </lineage>
</organism>
<evidence type="ECO:0000250" key="1"/>
<evidence type="ECO:0000255" key="2"/>
<evidence type="ECO:0000305" key="3"/>
<evidence type="ECO:0007744" key="4">
    <source>
    </source>
</evidence>
<evidence type="ECO:0007744" key="5">
    <source>
    </source>
</evidence>
<gene>
    <name type="primary">PGLP1B</name>
    <name type="ordered locus">At5g36790</name>
    <name type="ORF">F5H8.20</name>
</gene>
<name>PGP1B_ARATH</name>
<dbReference type="EC" id="3.1.3.18"/>
<dbReference type="EMBL" id="AB025605">
    <property type="protein sequence ID" value="BAA98057.1"/>
    <property type="status" value="ALT_SEQ"/>
    <property type="molecule type" value="Genomic_DNA"/>
</dbReference>
<dbReference type="EMBL" id="CP002688">
    <property type="protein sequence ID" value="AED94112.1"/>
    <property type="molecule type" value="Genomic_DNA"/>
</dbReference>
<dbReference type="EMBL" id="CP002688">
    <property type="protein sequence ID" value="AED94113.1"/>
    <property type="molecule type" value="Genomic_DNA"/>
</dbReference>
<dbReference type="EMBL" id="CP002688">
    <property type="protein sequence ID" value="AED94114.1"/>
    <property type="molecule type" value="Genomic_DNA"/>
</dbReference>
<dbReference type="EMBL" id="AY094446">
    <property type="protein sequence ID" value="AAM19818.1"/>
    <property type="molecule type" value="mRNA"/>
</dbReference>
<dbReference type="EMBL" id="AY122899">
    <property type="protein sequence ID" value="AAM67432.1"/>
    <property type="molecule type" value="mRNA"/>
</dbReference>
<dbReference type="EMBL" id="AK117908">
    <property type="protein sequence ID" value="BAC42546.1"/>
    <property type="status" value="ALT_INIT"/>
    <property type="molecule type" value="mRNA"/>
</dbReference>
<dbReference type="RefSeq" id="NP_001119318.1">
    <property type="nucleotide sequence ID" value="NM_001125846.2"/>
</dbReference>
<dbReference type="RefSeq" id="NP_001190428.1">
    <property type="nucleotide sequence ID" value="NM_001203499.1"/>
</dbReference>
<dbReference type="RefSeq" id="NP_198495.1">
    <property type="nucleotide sequence ID" value="NM_123037.5"/>
</dbReference>
<dbReference type="SMR" id="P0DKC4"/>
<dbReference type="BioGRID" id="18897">
    <property type="interactions" value="1"/>
</dbReference>
<dbReference type="FunCoup" id="P0DKC4">
    <property type="interactions" value="1475"/>
</dbReference>
<dbReference type="STRING" id="3702.P0DKC4"/>
<dbReference type="GlyGen" id="P0DKC4">
    <property type="glycosylation" value="1 site"/>
</dbReference>
<dbReference type="iPTMnet" id="P0DKC4"/>
<dbReference type="DNASU" id="833635"/>
<dbReference type="EnsemblPlants" id="AT5G36700.1">
    <property type="protein sequence ID" value="AT5G36700.1"/>
    <property type="gene ID" value="AT5G36700"/>
</dbReference>
<dbReference type="EnsemblPlants" id="AT5G36700.2">
    <property type="protein sequence ID" value="AT5G36700.2"/>
    <property type="gene ID" value="AT5G36700"/>
</dbReference>
<dbReference type="EnsemblPlants" id="AT5G36700.4">
    <property type="protein sequence ID" value="AT5G36700.4"/>
    <property type="gene ID" value="AT5G36700"/>
</dbReference>
<dbReference type="EnsemblPlants" id="AT5G36790.1">
    <property type="protein sequence ID" value="AT5G36790.1"/>
    <property type="gene ID" value="AT5G36790"/>
</dbReference>
<dbReference type="EnsemblPlants" id="AT5G36790.2">
    <property type="protein sequence ID" value="AT5G36790.2"/>
    <property type="gene ID" value="AT5G36790"/>
</dbReference>
<dbReference type="EnsemblPlants" id="AT5G36790.3">
    <property type="protein sequence ID" value="AT5G36790.3"/>
    <property type="gene ID" value="AT5G36790"/>
</dbReference>
<dbReference type="GeneID" id="833646"/>
<dbReference type="Gramene" id="AT5G36700.1">
    <property type="protein sequence ID" value="AT5G36700.1"/>
    <property type="gene ID" value="AT5G36700"/>
</dbReference>
<dbReference type="Gramene" id="AT5G36700.2">
    <property type="protein sequence ID" value="AT5G36700.2"/>
    <property type="gene ID" value="AT5G36700"/>
</dbReference>
<dbReference type="Gramene" id="AT5G36700.4">
    <property type="protein sequence ID" value="AT5G36700.4"/>
    <property type="gene ID" value="AT5G36700"/>
</dbReference>
<dbReference type="Gramene" id="AT5G36790.1">
    <property type="protein sequence ID" value="AT5G36790.1"/>
    <property type="gene ID" value="AT5G36790"/>
</dbReference>
<dbReference type="Gramene" id="AT5G36790.2">
    <property type="protein sequence ID" value="AT5G36790.2"/>
    <property type="gene ID" value="AT5G36790"/>
</dbReference>
<dbReference type="Gramene" id="AT5G36790.3">
    <property type="protein sequence ID" value="AT5G36790.3"/>
    <property type="gene ID" value="AT5G36790"/>
</dbReference>
<dbReference type="KEGG" id="ath:AT5G36700"/>
<dbReference type="KEGG" id="ath:AT5G36790"/>
<dbReference type="Araport" id="AT5G36790"/>
<dbReference type="TAIR" id="AT5G36790"/>
<dbReference type="HOGENOM" id="CLU_043473_0_0_1"/>
<dbReference type="InParanoid" id="P0DKC4"/>
<dbReference type="OMA" id="PPMHRET"/>
<dbReference type="OrthoDB" id="413953at2759"/>
<dbReference type="PhylomeDB" id="P0DKC4"/>
<dbReference type="BioCyc" id="MetaCyc:AT5G36790-MONOMER"/>
<dbReference type="CD-CODE" id="4299E36E">
    <property type="entry name" value="Nucleolus"/>
</dbReference>
<dbReference type="PRO" id="PR:P0DKC4"/>
<dbReference type="Proteomes" id="UP000006548">
    <property type="component" value="Chromosome 5"/>
</dbReference>
<dbReference type="ExpressionAtlas" id="P0DKC4">
    <property type="expression patterns" value="baseline and differential"/>
</dbReference>
<dbReference type="GO" id="GO:0009507">
    <property type="term" value="C:chloroplast"/>
    <property type="evidence" value="ECO:0007669"/>
    <property type="project" value="UniProtKB-SubCell"/>
</dbReference>
<dbReference type="GO" id="GO:0008967">
    <property type="term" value="F:phosphoglycolate phosphatase activity"/>
    <property type="evidence" value="ECO:0007669"/>
    <property type="project" value="UniProtKB-EC"/>
</dbReference>
<dbReference type="GO" id="GO:0009853">
    <property type="term" value="P:photorespiration"/>
    <property type="evidence" value="ECO:0007669"/>
    <property type="project" value="UniProtKB-KW"/>
</dbReference>
<dbReference type="CDD" id="cd07510">
    <property type="entry name" value="HAD_Pase_UmpH-like"/>
    <property type="match status" value="1"/>
</dbReference>
<dbReference type="FunFam" id="3.40.50.1000:FF:000447">
    <property type="match status" value="1"/>
</dbReference>
<dbReference type="FunFam" id="3.40.50.1000:FF:000039">
    <property type="entry name" value="Phosphoglycolate phosphatase"/>
    <property type="match status" value="1"/>
</dbReference>
<dbReference type="Gene3D" id="3.40.50.1000">
    <property type="entry name" value="HAD superfamily/HAD-like"/>
    <property type="match status" value="2"/>
</dbReference>
<dbReference type="InterPro" id="IPR036412">
    <property type="entry name" value="HAD-like_sf"/>
</dbReference>
<dbReference type="InterPro" id="IPR006357">
    <property type="entry name" value="HAD-SF_hydro_IIA"/>
</dbReference>
<dbReference type="InterPro" id="IPR023214">
    <property type="entry name" value="HAD_sf"/>
</dbReference>
<dbReference type="InterPro" id="IPR006349">
    <property type="entry name" value="PGP_euk"/>
</dbReference>
<dbReference type="NCBIfam" id="TIGR01460">
    <property type="entry name" value="HAD-SF-IIA"/>
    <property type="match status" value="1"/>
</dbReference>
<dbReference type="NCBIfam" id="TIGR01452">
    <property type="entry name" value="PGP_euk"/>
    <property type="match status" value="1"/>
</dbReference>
<dbReference type="PANTHER" id="PTHR19288">
    <property type="entry name" value="4-NITROPHENYLPHOSPHATASE-RELATED"/>
    <property type="match status" value="1"/>
</dbReference>
<dbReference type="PANTHER" id="PTHR19288:SF46">
    <property type="entry name" value="HALOACID DEHALOGENASE-LIKE HYDROLASE DOMAIN-CONTAINING PROTEIN 2"/>
    <property type="match status" value="1"/>
</dbReference>
<dbReference type="Pfam" id="PF13344">
    <property type="entry name" value="Hydrolase_6"/>
    <property type="match status" value="1"/>
</dbReference>
<dbReference type="Pfam" id="PF13242">
    <property type="entry name" value="Hydrolase_like"/>
    <property type="match status" value="1"/>
</dbReference>
<dbReference type="PIRSF" id="PIRSF000915">
    <property type="entry name" value="PGP-type_phosphatase"/>
    <property type="match status" value="1"/>
</dbReference>
<dbReference type="SFLD" id="SFLDS00003">
    <property type="entry name" value="Haloacid_Dehalogenase"/>
    <property type="match status" value="1"/>
</dbReference>
<dbReference type="SFLD" id="SFLDF00039">
    <property type="entry name" value="phosphoglycolate_phosphatase_2"/>
    <property type="match status" value="1"/>
</dbReference>
<dbReference type="SUPFAM" id="SSF56784">
    <property type="entry name" value="HAD-like"/>
    <property type="match status" value="1"/>
</dbReference>
<reference key="1">
    <citation type="submission" date="1999-04" db="EMBL/GenBank/DDBJ databases">
        <title>Structural analysis of Arabidopsis thaliana chromosome 5. XI.</title>
        <authorList>
            <person name="Kaneko T."/>
            <person name="Katoh T."/>
            <person name="Asamizu E."/>
            <person name="Sato S."/>
            <person name="Nakamura Y."/>
            <person name="Kotani H."/>
            <person name="Tabata S."/>
        </authorList>
    </citation>
    <scope>NUCLEOTIDE SEQUENCE [LARGE SCALE GENOMIC DNA]</scope>
    <source>
        <strain>cv. Columbia</strain>
    </source>
</reference>
<reference key="2">
    <citation type="journal article" date="2017" name="Plant J.">
        <title>Araport11: a complete reannotation of the Arabidopsis thaliana reference genome.</title>
        <authorList>
            <person name="Cheng C.Y."/>
            <person name="Krishnakumar V."/>
            <person name="Chan A.P."/>
            <person name="Thibaud-Nissen F."/>
            <person name="Schobel S."/>
            <person name="Town C.D."/>
        </authorList>
    </citation>
    <scope>GENOME REANNOTATION</scope>
    <source>
        <strain>cv. Columbia</strain>
    </source>
</reference>
<reference key="3">
    <citation type="journal article" date="2003" name="Science">
        <title>Empirical analysis of transcriptional activity in the Arabidopsis genome.</title>
        <authorList>
            <person name="Yamada K."/>
            <person name="Lim J."/>
            <person name="Dale J.M."/>
            <person name="Chen H."/>
            <person name="Shinn P."/>
            <person name="Palm C.J."/>
            <person name="Southwick A.M."/>
            <person name="Wu H.C."/>
            <person name="Kim C.J."/>
            <person name="Nguyen M."/>
            <person name="Pham P.K."/>
            <person name="Cheuk R.F."/>
            <person name="Karlin-Newmann G."/>
            <person name="Liu S.X."/>
            <person name="Lam B."/>
            <person name="Sakano H."/>
            <person name="Wu T."/>
            <person name="Yu G."/>
            <person name="Miranda M."/>
            <person name="Quach H.L."/>
            <person name="Tripp M."/>
            <person name="Chang C.H."/>
            <person name="Lee J.M."/>
            <person name="Toriumi M.J."/>
            <person name="Chan M.M."/>
            <person name="Tang C.C."/>
            <person name="Onodera C.S."/>
            <person name="Deng J.M."/>
            <person name="Akiyama K."/>
            <person name="Ansari Y."/>
            <person name="Arakawa T."/>
            <person name="Banh J."/>
            <person name="Banno F."/>
            <person name="Bowser L."/>
            <person name="Brooks S.Y."/>
            <person name="Carninci P."/>
            <person name="Chao Q."/>
            <person name="Choy N."/>
            <person name="Enju A."/>
            <person name="Goldsmith A.D."/>
            <person name="Gurjal M."/>
            <person name="Hansen N.F."/>
            <person name="Hayashizaki Y."/>
            <person name="Johnson-Hopson C."/>
            <person name="Hsuan V.W."/>
            <person name="Iida K."/>
            <person name="Karnes M."/>
            <person name="Khan S."/>
            <person name="Koesema E."/>
            <person name="Ishida J."/>
            <person name="Jiang P.X."/>
            <person name="Jones T."/>
            <person name="Kawai J."/>
            <person name="Kamiya A."/>
            <person name="Meyers C."/>
            <person name="Nakajima M."/>
            <person name="Narusaka M."/>
            <person name="Seki M."/>
            <person name="Sakurai T."/>
            <person name="Satou M."/>
            <person name="Tamse R."/>
            <person name="Vaysberg M."/>
            <person name="Wallender E.K."/>
            <person name="Wong C."/>
            <person name="Yamamura Y."/>
            <person name="Yuan S."/>
            <person name="Shinozaki K."/>
            <person name="Davis R.W."/>
            <person name="Theologis A."/>
            <person name="Ecker J.R."/>
        </authorList>
    </citation>
    <scope>NUCLEOTIDE SEQUENCE [LARGE SCALE MRNA]</scope>
    <source>
        <strain>cv. Columbia</strain>
    </source>
</reference>
<reference key="4">
    <citation type="journal article" date="2002" name="Science">
        <title>Functional annotation of a full-length Arabidopsis cDNA collection.</title>
        <authorList>
            <person name="Seki M."/>
            <person name="Narusaka M."/>
            <person name="Kamiya A."/>
            <person name="Ishida J."/>
            <person name="Satou M."/>
            <person name="Sakurai T."/>
            <person name="Nakajima M."/>
            <person name="Enju A."/>
            <person name="Akiyama K."/>
            <person name="Oono Y."/>
            <person name="Muramatsu M."/>
            <person name="Hayashizaki Y."/>
            <person name="Kawai J."/>
            <person name="Carninci P."/>
            <person name="Itoh M."/>
            <person name="Ishii Y."/>
            <person name="Arakawa T."/>
            <person name="Shibata K."/>
            <person name="Shinagawa A."/>
            <person name="Shinozaki K."/>
        </authorList>
    </citation>
    <scope>NUCLEOTIDE SEQUENCE [LARGE SCALE MRNA] OF 15-362</scope>
    <source>
        <strain>cv. Columbia</strain>
    </source>
</reference>
<reference key="5">
    <citation type="journal article" date="2009" name="Plant Physiol.">
        <title>Large-scale Arabidopsis phosphoproteome profiling reveals novel chloroplast kinase substrates and phosphorylation networks.</title>
        <authorList>
            <person name="Reiland S."/>
            <person name="Messerli G."/>
            <person name="Baerenfaller K."/>
            <person name="Gerrits B."/>
            <person name="Endler A."/>
            <person name="Grossmann J."/>
            <person name="Gruissem W."/>
            <person name="Baginsky S."/>
        </authorList>
    </citation>
    <scope>PHOSPHORYLATION [LARGE SCALE ANALYSIS] AT SER-356</scope>
    <scope>IDENTIFICATION BY MASS SPECTROMETRY [LARGE SCALE ANALYSIS]</scope>
</reference>
<reference key="6">
    <citation type="journal article" date="2012" name="J. Proteome Res.">
        <title>Identification of phosphoproteins in Arabidopsis thaliana leaves using polyethylene glycol fractionation, immobilized metal-ion affinity chromatography, two-dimensional gel electrophoresis and mass spectrometry.</title>
        <authorList>
            <person name="Aryal U.K."/>
            <person name="Krochko J.E."/>
            <person name="Ross A.R."/>
        </authorList>
    </citation>
    <scope>IDENTIFICATION BY MASS SPECTROMETRY [LARGE SCALE ANALYSIS]</scope>
</reference>
<reference key="7">
    <citation type="journal article" date="2012" name="Mol. Cell. Proteomics">
        <title>Comparative large-scale characterisation of plant vs. mammal proteins reveals similar and idiosyncratic N-alpha acetylation features.</title>
        <authorList>
            <person name="Bienvenut W.V."/>
            <person name="Sumpton D."/>
            <person name="Martinez A."/>
            <person name="Lilla S."/>
            <person name="Espagne C."/>
            <person name="Meinnel T."/>
            <person name="Giglione C."/>
        </authorList>
    </citation>
    <scope>ACETYLATION [LARGE SCALE ANALYSIS] AT THR-55</scope>
    <scope>CLEAVAGE OF TRANSIT PEPTIDE [LARGE SCALE ANALYSIS] AFTER MET-54</scope>
    <scope>IDENTIFICATION BY MASS SPECTROMETRY [LARGE SCALE ANALYSIS]</scope>
</reference>
<accession>P0DKC4</accession>
<accession>Q8L3U4</accession>
<accession>Q9LTH1</accession>
<feature type="transit peptide" description="Chloroplast" evidence="5">
    <location>
        <begin position="1"/>
        <end position="54"/>
    </location>
</feature>
<feature type="chain" id="PRO_0000422098" description="Phosphoglycolate phosphatase 1B, chloroplastic">
    <location>
        <begin position="55"/>
        <end position="362"/>
    </location>
</feature>
<feature type="active site" description="Nucleophile" evidence="1">
    <location>
        <position position="80"/>
    </location>
</feature>
<feature type="modified residue" description="N-acetylthreonine" evidence="5">
    <location>
        <position position="55"/>
    </location>
</feature>
<feature type="modified residue" description="Phosphoserine" evidence="4">
    <location>
        <position position="356"/>
    </location>
</feature>
<sequence>MLSRSVASAVTPVSSSSLLPNSKPIFCLKTLSGYRSSSFCGGCIRKINHKPLRMTSSNITPRAMATQQLENADQLIDSVETFIFDCDGVIWKGDKLIEGVPETLDMLRAKGKRLVFVTNNSTKSRKQYGKKFETLGLNVNEEEIFASSFAAAAYLQSINFPKDKKVYVIGEEGILKELELAGFQYLGGPDDGKRQIELKPGFLMEHDHDVGAVVVGFDRYFNYYKIQYGTLCIRENPGCLFIATNRDAVTHLTDAQEWAGGGSMVGALVGSTQREPLVVGKPSTFMMDYLADKFGIQKSQICMVGDRLDTDILFGQNGGCKTLLVLSGVTSISMLESPENKIQPDFYTSKISDFLSPKAATV</sequence>
<protein>
    <recommendedName>
        <fullName>Phosphoglycolate phosphatase 1B, chloroplastic</fullName>
        <ecNumber>3.1.3.18</ecNumber>
    </recommendedName>
</protein>
<comment type="function">
    <text evidence="1">Photorespiratory enzyme that dephosphorylates the 2-phosphoglycolate produced by the RuBisCO oxygenation reaction.</text>
</comment>
<comment type="catalytic activity">
    <reaction>
        <text>2-phosphoglycolate + H2O = glycolate + phosphate</text>
        <dbReference type="Rhea" id="RHEA:14369"/>
        <dbReference type="ChEBI" id="CHEBI:15377"/>
        <dbReference type="ChEBI" id="CHEBI:29805"/>
        <dbReference type="ChEBI" id="CHEBI:43474"/>
        <dbReference type="ChEBI" id="CHEBI:58033"/>
        <dbReference type="EC" id="3.1.3.18"/>
    </reaction>
</comment>
<comment type="subcellular location">
    <subcellularLocation>
        <location evidence="2">Plastid</location>
        <location evidence="2">Chloroplast</location>
    </subcellularLocation>
</comment>
<comment type="similarity">
    <text evidence="3">Belongs to the HAD-like hydrolase superfamily. CbbY/CbbZ/Gph/YieH family.</text>
</comment>
<comment type="sequence caution" evidence="3">
    <conflict type="erroneous gene model prediction">
        <sequence resource="EMBL-CDS" id="BAA98057"/>
    </conflict>
</comment>
<comment type="sequence caution" evidence="3">
    <conflict type="erroneous initiation">
        <sequence resource="EMBL-CDS" id="BAC42546"/>
    </conflict>
    <text>Truncated N-terminus.</text>
</comment>
<proteinExistence type="evidence at protein level"/>